<reference key="1">
    <citation type="journal article" date="2004" name="Proc. Natl. Acad. Sci. U.S.A.">
        <title>Complete genomes of two clinical Staphylococcus aureus strains: evidence for the rapid evolution of virulence and drug resistance.</title>
        <authorList>
            <person name="Holden M.T.G."/>
            <person name="Feil E.J."/>
            <person name="Lindsay J.A."/>
            <person name="Peacock S.J."/>
            <person name="Day N.P.J."/>
            <person name="Enright M.C."/>
            <person name="Foster T.J."/>
            <person name="Moore C.E."/>
            <person name="Hurst L."/>
            <person name="Atkin R."/>
            <person name="Barron A."/>
            <person name="Bason N."/>
            <person name="Bentley S.D."/>
            <person name="Chillingworth C."/>
            <person name="Chillingworth T."/>
            <person name="Churcher C."/>
            <person name="Clark L."/>
            <person name="Corton C."/>
            <person name="Cronin A."/>
            <person name="Doggett J."/>
            <person name="Dowd L."/>
            <person name="Feltwell T."/>
            <person name="Hance Z."/>
            <person name="Harris B."/>
            <person name="Hauser H."/>
            <person name="Holroyd S."/>
            <person name="Jagels K."/>
            <person name="James K.D."/>
            <person name="Lennard N."/>
            <person name="Line A."/>
            <person name="Mayes R."/>
            <person name="Moule S."/>
            <person name="Mungall K."/>
            <person name="Ormond D."/>
            <person name="Quail M.A."/>
            <person name="Rabbinowitsch E."/>
            <person name="Rutherford K.M."/>
            <person name="Sanders M."/>
            <person name="Sharp S."/>
            <person name="Simmonds M."/>
            <person name="Stevens K."/>
            <person name="Whitehead S."/>
            <person name="Barrell B.G."/>
            <person name="Spratt B.G."/>
            <person name="Parkhill J."/>
        </authorList>
    </citation>
    <scope>NUCLEOTIDE SEQUENCE [LARGE SCALE GENOMIC DNA]</scope>
    <source>
        <strain>MSSA476</strain>
    </source>
</reference>
<comment type="function">
    <text evidence="1">Catalyzes the condensation of ATP and 5-phosphoribose 1-diphosphate to form N'-(5'-phosphoribosyl)-ATP (PR-ATP). Has a crucial role in the pathway because the rate of histidine biosynthesis seems to be controlled primarily by regulation of HisG enzymatic activity.</text>
</comment>
<comment type="catalytic activity">
    <reaction evidence="1">
        <text>1-(5-phospho-beta-D-ribosyl)-ATP + diphosphate = 5-phospho-alpha-D-ribose 1-diphosphate + ATP</text>
        <dbReference type="Rhea" id="RHEA:18473"/>
        <dbReference type="ChEBI" id="CHEBI:30616"/>
        <dbReference type="ChEBI" id="CHEBI:33019"/>
        <dbReference type="ChEBI" id="CHEBI:58017"/>
        <dbReference type="ChEBI" id="CHEBI:73183"/>
        <dbReference type="EC" id="2.4.2.17"/>
    </reaction>
</comment>
<comment type="pathway">
    <text evidence="1">Amino-acid biosynthesis; L-histidine biosynthesis; L-histidine from 5-phospho-alpha-D-ribose 1-diphosphate: step 1/9.</text>
</comment>
<comment type="subunit">
    <text evidence="1">Heteromultimer composed of HisG and HisZ subunits.</text>
</comment>
<comment type="subcellular location">
    <subcellularLocation>
        <location evidence="1">Cytoplasm</location>
    </subcellularLocation>
</comment>
<comment type="domain">
    <text>Lacks the C-terminal regulatory region which is replaced by HisZ.</text>
</comment>
<comment type="similarity">
    <text evidence="1">Belongs to the ATP phosphoribosyltransferase family. Short subfamily.</text>
</comment>
<proteinExistence type="inferred from homology"/>
<protein>
    <recommendedName>
        <fullName evidence="1">ATP phosphoribosyltransferase</fullName>
        <shortName evidence="1">ATP-PRT</shortName>
        <shortName evidence="1">ATP-PRTase</shortName>
        <ecNumber evidence="1">2.4.2.17</ecNumber>
    </recommendedName>
</protein>
<feature type="chain" id="PRO_0000151935" description="ATP phosphoribosyltransferase">
    <location>
        <begin position="1"/>
        <end position="204"/>
    </location>
</feature>
<organism>
    <name type="scientific">Staphylococcus aureus (strain MSSA476)</name>
    <dbReference type="NCBI Taxonomy" id="282459"/>
    <lineage>
        <taxon>Bacteria</taxon>
        <taxon>Bacillati</taxon>
        <taxon>Bacillota</taxon>
        <taxon>Bacilli</taxon>
        <taxon>Bacillales</taxon>
        <taxon>Staphylococcaceae</taxon>
        <taxon>Staphylococcus</taxon>
    </lineage>
</organism>
<sequence length="204" mass="22643">MLRIAIAKGRLMDSLINYLDVIEYTTLSETLKNRERQLLLSVDNIECILVKGSDVPIYVEQGMADIGIVGSDILDERQYNVNNLLNMPFGACHFAVAAKPETTNYRKIATSYVHTAETYFKSKGIDVELIKLNGSVELACVVDMVDGIVDIVQTGTTLKANGLVEKQHISDINARLITNKAAYFKKSQLIEQFIRSLEVSIANA</sequence>
<name>HIS1_STAAS</name>
<keyword id="KW-0028">Amino-acid biosynthesis</keyword>
<keyword id="KW-0067">ATP-binding</keyword>
<keyword id="KW-0963">Cytoplasm</keyword>
<keyword id="KW-0328">Glycosyltransferase</keyword>
<keyword id="KW-0368">Histidine biosynthesis</keyword>
<keyword id="KW-0547">Nucleotide-binding</keyword>
<keyword id="KW-0808">Transferase</keyword>
<dbReference type="EC" id="2.4.2.17" evidence="1"/>
<dbReference type="EMBL" id="BX571857">
    <property type="protein sequence ID" value="CAG44381.1"/>
    <property type="molecule type" value="Genomic_DNA"/>
</dbReference>
<dbReference type="RefSeq" id="WP_000944149.1">
    <property type="nucleotide sequence ID" value="NC_002953.3"/>
</dbReference>
<dbReference type="SMR" id="Q6G5Z6"/>
<dbReference type="KEGG" id="sas:SAS2564"/>
<dbReference type="HOGENOM" id="CLU_038115_2_0_9"/>
<dbReference type="UniPathway" id="UPA00031">
    <property type="reaction ID" value="UER00006"/>
</dbReference>
<dbReference type="GO" id="GO:0005737">
    <property type="term" value="C:cytoplasm"/>
    <property type="evidence" value="ECO:0007669"/>
    <property type="project" value="UniProtKB-SubCell"/>
</dbReference>
<dbReference type="GO" id="GO:0005524">
    <property type="term" value="F:ATP binding"/>
    <property type="evidence" value="ECO:0007669"/>
    <property type="project" value="UniProtKB-KW"/>
</dbReference>
<dbReference type="GO" id="GO:0003879">
    <property type="term" value="F:ATP phosphoribosyltransferase activity"/>
    <property type="evidence" value="ECO:0007669"/>
    <property type="project" value="UniProtKB-UniRule"/>
</dbReference>
<dbReference type="GO" id="GO:0000105">
    <property type="term" value="P:L-histidine biosynthetic process"/>
    <property type="evidence" value="ECO:0007669"/>
    <property type="project" value="UniProtKB-UniRule"/>
</dbReference>
<dbReference type="CDD" id="cd13595">
    <property type="entry name" value="PBP2_HisGs"/>
    <property type="match status" value="1"/>
</dbReference>
<dbReference type="FunFam" id="3.40.190.10:FF:000008">
    <property type="entry name" value="ATP phosphoribosyltransferase"/>
    <property type="match status" value="1"/>
</dbReference>
<dbReference type="Gene3D" id="3.40.190.10">
    <property type="entry name" value="Periplasmic binding protein-like II"/>
    <property type="match status" value="2"/>
</dbReference>
<dbReference type="HAMAP" id="MF_01018">
    <property type="entry name" value="HisG_Short"/>
    <property type="match status" value="1"/>
</dbReference>
<dbReference type="InterPro" id="IPR013820">
    <property type="entry name" value="ATP_PRibTrfase_cat"/>
</dbReference>
<dbReference type="InterPro" id="IPR001348">
    <property type="entry name" value="ATP_PRibTrfase_HisG"/>
</dbReference>
<dbReference type="InterPro" id="IPR024893">
    <property type="entry name" value="ATP_PRibTrfase_HisG_short"/>
</dbReference>
<dbReference type="NCBIfam" id="TIGR00070">
    <property type="entry name" value="hisG"/>
    <property type="match status" value="1"/>
</dbReference>
<dbReference type="PANTHER" id="PTHR21403:SF8">
    <property type="entry name" value="ATP PHOSPHORIBOSYLTRANSFERASE"/>
    <property type="match status" value="1"/>
</dbReference>
<dbReference type="PANTHER" id="PTHR21403">
    <property type="entry name" value="ATP PHOSPHORIBOSYLTRANSFERASE ATP-PRTASE"/>
    <property type="match status" value="1"/>
</dbReference>
<dbReference type="Pfam" id="PF01634">
    <property type="entry name" value="HisG"/>
    <property type="match status" value="1"/>
</dbReference>
<dbReference type="SUPFAM" id="SSF53850">
    <property type="entry name" value="Periplasmic binding protein-like II"/>
    <property type="match status" value="1"/>
</dbReference>
<accession>Q6G5Z6</accession>
<evidence type="ECO:0000255" key="1">
    <source>
        <dbReference type="HAMAP-Rule" id="MF_01018"/>
    </source>
</evidence>
<gene>
    <name evidence="1" type="primary">hisG</name>
    <name type="ordered locus">SAS2564</name>
</gene>